<comment type="function">
    <text evidence="1">Sigma factors are initiation factors that promote the attachment of RNA polymerase to specific initiation sites and are then released.</text>
</comment>
<comment type="activity regulation">
    <text evidence="1">Negatively regulated by the anti-sigma-I factor RsgI8.</text>
</comment>
<comment type="subunit">
    <text evidence="1">Interacts with RsgI8.</text>
</comment>
<comment type="subcellular location">
    <subcellularLocation>
        <location evidence="1">Cytoplasm</location>
    </subcellularLocation>
</comment>
<comment type="similarity">
    <text evidence="1">Belongs to the sigma-70 factor family. SigI subfamily.</text>
</comment>
<protein>
    <recommendedName>
        <fullName evidence="3">RNA polymerase sigma factor SigI8</fullName>
    </recommendedName>
</protein>
<accession>A3DJP3</accession>
<reference key="1">
    <citation type="submission" date="2007-02" db="EMBL/GenBank/DDBJ databases">
        <title>Complete sequence of Clostridium thermocellum ATCC 27405.</title>
        <authorList>
            <consortium name="US DOE Joint Genome Institute"/>
            <person name="Copeland A."/>
            <person name="Lucas S."/>
            <person name="Lapidus A."/>
            <person name="Barry K."/>
            <person name="Detter J.C."/>
            <person name="Glavina del Rio T."/>
            <person name="Hammon N."/>
            <person name="Israni S."/>
            <person name="Dalin E."/>
            <person name="Tice H."/>
            <person name="Pitluck S."/>
            <person name="Chertkov O."/>
            <person name="Brettin T."/>
            <person name="Bruce D."/>
            <person name="Han C."/>
            <person name="Tapia R."/>
            <person name="Gilna P."/>
            <person name="Schmutz J."/>
            <person name="Larimer F."/>
            <person name="Land M."/>
            <person name="Hauser L."/>
            <person name="Kyrpides N."/>
            <person name="Mikhailova N."/>
            <person name="Wu J.H.D."/>
            <person name="Newcomb M."/>
            <person name="Richardson P."/>
        </authorList>
    </citation>
    <scope>NUCLEOTIDE SEQUENCE [LARGE SCALE GENOMIC DNA]</scope>
    <source>
        <strain>ATCC 27405 / DSM 1237 / JCM 9322 / NBRC 103400 / NCIMB 10682 / NRRL B-4536 / VPI 7372</strain>
    </source>
</reference>
<reference key="2">
    <citation type="journal article" date="2010" name="FEMS Microbiol. Lett.">
        <title>The unique set of putative membrane-associated anti-sigma factors in Clostridium thermocellum suggests a novel extracellular carbohydrate-sensing mechanism involved in gene regulation.</title>
        <authorList>
            <person name="Kahel-Raifer H."/>
            <person name="Jindou S."/>
            <person name="Bahari L."/>
            <person name="Nataf Y."/>
            <person name="Shoham Y."/>
            <person name="Bayer E.A."/>
            <person name="Borovok I."/>
            <person name="Lamed R."/>
        </authorList>
    </citation>
    <scope>NOMENCLATURE</scope>
    <source>
        <strain>ATCC 27405 / DSM 1237 / JCM 9322 / NBRC 103400 / NCIMB 10682 / NRRL B-4536 / VPI 7372</strain>
    </source>
</reference>
<evidence type="ECO:0000255" key="1">
    <source>
        <dbReference type="HAMAP-Rule" id="MF_02064"/>
    </source>
</evidence>
<evidence type="ECO:0000303" key="2">
    <source>
    </source>
</evidence>
<evidence type="ECO:0000305" key="3"/>
<evidence type="ECO:0000312" key="4">
    <source>
        <dbReference type="EMBL" id="ABN54172.1"/>
    </source>
</evidence>
<sequence length="254" mass="30101">MINLGSYNLLRHEKDSFLEIIRRIKDGDNLLRNKFIDDFKPFILKCVSQLVGKKNDLTQSDEYSIALIAFNEAIESYDLDKKTKFVSFSKQVIKRRLIDYLRSTKKNNVAVPFSYFNDCNSSFNDSSTGNFEEKFLYDRNSDYSIDFEAREEIKNLELKICEYKMTIEDLIECSPKHRDTIILCLNVANIIIEDESLYQMFNKRKTLPYKELTERFNLCRRTLEKNRKFITAMVLILKSDLEVLKKYIYDTLGR</sequence>
<organism>
    <name type="scientific">Acetivibrio thermocellus (strain ATCC 27405 / DSM 1237 / JCM 9322 / NBRC 103400 / NCIMB 10682 / NRRL B-4536 / VPI 7372)</name>
    <name type="common">Clostridium thermocellum</name>
    <dbReference type="NCBI Taxonomy" id="203119"/>
    <lineage>
        <taxon>Bacteria</taxon>
        <taxon>Bacillati</taxon>
        <taxon>Bacillota</taxon>
        <taxon>Clostridia</taxon>
        <taxon>Eubacteriales</taxon>
        <taxon>Oscillospiraceae</taxon>
        <taxon>Acetivibrio</taxon>
    </lineage>
</organism>
<dbReference type="EMBL" id="CP000568">
    <property type="protein sequence ID" value="ABN54172.1"/>
    <property type="molecule type" value="Genomic_DNA"/>
</dbReference>
<dbReference type="SMR" id="A3DJP3"/>
<dbReference type="STRING" id="203119.Cthe_2975"/>
<dbReference type="GeneID" id="35803386"/>
<dbReference type="KEGG" id="cth:Cthe_2975"/>
<dbReference type="eggNOG" id="COG1191">
    <property type="taxonomic scope" value="Bacteria"/>
</dbReference>
<dbReference type="HOGENOM" id="CLU_082361_0_0_9"/>
<dbReference type="OrthoDB" id="3190733at2"/>
<dbReference type="Proteomes" id="UP000002145">
    <property type="component" value="Chromosome"/>
</dbReference>
<dbReference type="GO" id="GO:0005737">
    <property type="term" value="C:cytoplasm"/>
    <property type="evidence" value="ECO:0007669"/>
    <property type="project" value="UniProtKB-SubCell"/>
</dbReference>
<dbReference type="GO" id="GO:0003677">
    <property type="term" value="F:DNA binding"/>
    <property type="evidence" value="ECO:0007669"/>
    <property type="project" value="UniProtKB-UniRule"/>
</dbReference>
<dbReference type="GO" id="GO:0016987">
    <property type="term" value="F:sigma factor activity"/>
    <property type="evidence" value="ECO:0007669"/>
    <property type="project" value="UniProtKB-UniRule"/>
</dbReference>
<dbReference type="GO" id="GO:0006352">
    <property type="term" value="P:DNA-templated transcription initiation"/>
    <property type="evidence" value="ECO:0007669"/>
    <property type="project" value="UniProtKB-UniRule"/>
</dbReference>
<dbReference type="Gene3D" id="1.10.1740.10">
    <property type="match status" value="1"/>
</dbReference>
<dbReference type="HAMAP" id="MF_02064">
    <property type="entry name" value="Sigma70_SigI"/>
    <property type="match status" value="1"/>
</dbReference>
<dbReference type="InterPro" id="IPR014244">
    <property type="entry name" value="RNA_pol_sigma-I"/>
</dbReference>
<dbReference type="InterPro" id="IPR007627">
    <property type="entry name" value="RNA_pol_sigma70_r2"/>
</dbReference>
<dbReference type="InterPro" id="IPR013325">
    <property type="entry name" value="RNA_pol_sigma_r2"/>
</dbReference>
<dbReference type="NCBIfam" id="NF006173">
    <property type="entry name" value="PRK08311.2-1"/>
    <property type="match status" value="1"/>
</dbReference>
<dbReference type="NCBIfam" id="TIGR02895">
    <property type="entry name" value="spore_sigI"/>
    <property type="match status" value="1"/>
</dbReference>
<dbReference type="Pfam" id="PF04542">
    <property type="entry name" value="Sigma70_r2"/>
    <property type="match status" value="1"/>
</dbReference>
<dbReference type="PIRSF" id="PIRSF038953">
    <property type="entry name" value="SigI"/>
    <property type="match status" value="1"/>
</dbReference>
<dbReference type="SUPFAM" id="SSF88946">
    <property type="entry name" value="Sigma2 domain of RNA polymerase sigma factors"/>
    <property type="match status" value="1"/>
</dbReference>
<feature type="chain" id="PRO_0000436522" description="RNA polymerase sigma factor SigI8">
    <location>
        <begin position="1"/>
        <end position="254"/>
    </location>
</feature>
<feature type="DNA-binding region" description="H-T-H motif" evidence="1">
    <location>
        <begin position="209"/>
        <end position="228"/>
    </location>
</feature>
<feature type="short sequence motif" description="Polymerase core binding" evidence="1">
    <location>
        <begin position="61"/>
        <end position="74"/>
    </location>
</feature>
<gene>
    <name evidence="2" type="primary">sigI8</name>
    <name evidence="4" type="ordered locus">Cthe_2975</name>
</gene>
<keyword id="KW-0963">Cytoplasm</keyword>
<keyword id="KW-0238">DNA-binding</keyword>
<keyword id="KW-1185">Reference proteome</keyword>
<keyword id="KW-0731">Sigma factor</keyword>
<keyword id="KW-0804">Transcription</keyword>
<keyword id="KW-0805">Transcription regulation</keyword>
<name>SIGI8_ACET2</name>
<proteinExistence type="inferred from homology"/>